<organism>
    <name type="scientific">Methanosarcina barkeri (strain Fusaro / DSM 804)</name>
    <dbReference type="NCBI Taxonomy" id="269797"/>
    <lineage>
        <taxon>Archaea</taxon>
        <taxon>Methanobacteriati</taxon>
        <taxon>Methanobacteriota</taxon>
        <taxon>Stenosarchaea group</taxon>
        <taxon>Methanomicrobia</taxon>
        <taxon>Methanosarcinales</taxon>
        <taxon>Methanosarcinaceae</taxon>
        <taxon>Methanosarcina</taxon>
    </lineage>
</organism>
<gene>
    <name evidence="1" type="primary">argC</name>
    <name type="ordered locus">Mbar_A2001</name>
</gene>
<feature type="chain" id="PRO_1000011010" description="N-acetyl-gamma-glutamyl-phosphate reductase">
    <location>
        <begin position="1"/>
        <end position="337"/>
    </location>
</feature>
<feature type="active site" evidence="1">
    <location>
        <position position="145"/>
    </location>
</feature>
<evidence type="ECO:0000255" key="1">
    <source>
        <dbReference type="HAMAP-Rule" id="MF_00150"/>
    </source>
</evidence>
<accession>Q46B07</accession>
<name>ARGC_METBF</name>
<keyword id="KW-0028">Amino-acid biosynthesis</keyword>
<keyword id="KW-0055">Arginine biosynthesis</keyword>
<keyword id="KW-0963">Cytoplasm</keyword>
<keyword id="KW-0521">NADP</keyword>
<keyword id="KW-0560">Oxidoreductase</keyword>
<sequence length="337" mass="36792">MIKAGIIGASGYTGGELLRLLVNHPNVKLELATSRSLAGKPVTSTHRHLEGFLDLNYENPDSEDIRERCDVVFLAVPHGSAMNYVPELLDGNTKVVDLSADYRLETSEFEKIYGIKHSDPRNAVYGLVELHPEVAKENFVANPGCFPTGSILAAAPLAAAGLIDIAVFDSKTGISGAGISPTQNSHYPNLAENIIPYKLTAHRHRAEIVQELTGLEGKLRNINFTPHVIPSIRGIFTTAHLFTKETLSTDDLKTIYEEFYRDRPFIRFPSGVPSLTAVRGSNFCDISFEADKENNRVVVLSAIDNLVKGASGQAIQNMNLMFGLDETCGLWMPATAP</sequence>
<proteinExistence type="inferred from homology"/>
<reference key="1">
    <citation type="journal article" date="2006" name="J. Bacteriol.">
        <title>The Methanosarcina barkeri genome: comparative analysis with Methanosarcina acetivorans and Methanosarcina mazei reveals extensive rearrangement within methanosarcinal genomes.</title>
        <authorList>
            <person name="Maeder D.L."/>
            <person name="Anderson I."/>
            <person name="Brettin T.S."/>
            <person name="Bruce D.C."/>
            <person name="Gilna P."/>
            <person name="Han C.S."/>
            <person name="Lapidus A."/>
            <person name="Metcalf W.W."/>
            <person name="Saunders E."/>
            <person name="Tapia R."/>
            <person name="Sowers K.R."/>
        </authorList>
    </citation>
    <scope>NUCLEOTIDE SEQUENCE [LARGE SCALE GENOMIC DNA]</scope>
    <source>
        <strain>Fusaro / DSM 804</strain>
    </source>
</reference>
<comment type="function">
    <text evidence="1">Catalyzes the NADPH-dependent reduction of N-acetyl-5-glutamyl phosphate to yield N-acetyl-L-glutamate 5-semialdehyde.</text>
</comment>
<comment type="catalytic activity">
    <reaction evidence="1">
        <text>N-acetyl-L-glutamate 5-semialdehyde + phosphate + NADP(+) = N-acetyl-L-glutamyl 5-phosphate + NADPH + H(+)</text>
        <dbReference type="Rhea" id="RHEA:21588"/>
        <dbReference type="ChEBI" id="CHEBI:15378"/>
        <dbReference type="ChEBI" id="CHEBI:29123"/>
        <dbReference type="ChEBI" id="CHEBI:43474"/>
        <dbReference type="ChEBI" id="CHEBI:57783"/>
        <dbReference type="ChEBI" id="CHEBI:57936"/>
        <dbReference type="ChEBI" id="CHEBI:58349"/>
        <dbReference type="EC" id="1.2.1.38"/>
    </reaction>
</comment>
<comment type="pathway">
    <text evidence="1">Amino-acid biosynthesis; L-arginine biosynthesis; N(2)-acetyl-L-ornithine from L-glutamate: step 3/4.</text>
</comment>
<comment type="subcellular location">
    <subcellularLocation>
        <location evidence="1">Cytoplasm</location>
    </subcellularLocation>
</comment>
<comment type="similarity">
    <text evidence="1">Belongs to the NAGSA dehydrogenase family. Type 1 subfamily.</text>
</comment>
<protein>
    <recommendedName>
        <fullName evidence="1">N-acetyl-gamma-glutamyl-phosphate reductase</fullName>
        <shortName evidence="1">AGPR</shortName>
        <ecNumber evidence="1">1.2.1.38</ecNumber>
    </recommendedName>
    <alternativeName>
        <fullName evidence="1">N-acetyl-glutamate semialdehyde dehydrogenase</fullName>
        <shortName evidence="1">NAGSA dehydrogenase</shortName>
    </alternativeName>
</protein>
<dbReference type="EC" id="1.2.1.38" evidence="1"/>
<dbReference type="EMBL" id="CP000099">
    <property type="protein sequence ID" value="AAZ70935.1"/>
    <property type="molecule type" value="Genomic_DNA"/>
</dbReference>
<dbReference type="SMR" id="Q46B07"/>
<dbReference type="STRING" id="269797.Mbar_A2001"/>
<dbReference type="PaxDb" id="269797-Mbar_A2001"/>
<dbReference type="KEGG" id="mba:Mbar_A2001"/>
<dbReference type="eggNOG" id="arCOG00495">
    <property type="taxonomic scope" value="Archaea"/>
</dbReference>
<dbReference type="HOGENOM" id="CLU_006384_0_1_2"/>
<dbReference type="OrthoDB" id="372053at2157"/>
<dbReference type="UniPathway" id="UPA00068">
    <property type="reaction ID" value="UER00108"/>
</dbReference>
<dbReference type="GO" id="GO:0005737">
    <property type="term" value="C:cytoplasm"/>
    <property type="evidence" value="ECO:0007669"/>
    <property type="project" value="UniProtKB-SubCell"/>
</dbReference>
<dbReference type="GO" id="GO:0003942">
    <property type="term" value="F:N-acetyl-gamma-glutamyl-phosphate reductase activity"/>
    <property type="evidence" value="ECO:0007669"/>
    <property type="project" value="UniProtKB-UniRule"/>
</dbReference>
<dbReference type="GO" id="GO:0051287">
    <property type="term" value="F:NAD binding"/>
    <property type="evidence" value="ECO:0007669"/>
    <property type="project" value="InterPro"/>
</dbReference>
<dbReference type="GO" id="GO:0070401">
    <property type="term" value="F:NADP+ binding"/>
    <property type="evidence" value="ECO:0007669"/>
    <property type="project" value="InterPro"/>
</dbReference>
<dbReference type="GO" id="GO:0006526">
    <property type="term" value="P:L-arginine biosynthetic process"/>
    <property type="evidence" value="ECO:0007669"/>
    <property type="project" value="UniProtKB-UniRule"/>
</dbReference>
<dbReference type="CDD" id="cd23934">
    <property type="entry name" value="AGPR_1_C"/>
    <property type="match status" value="1"/>
</dbReference>
<dbReference type="CDD" id="cd17895">
    <property type="entry name" value="AGPR_1_N"/>
    <property type="match status" value="1"/>
</dbReference>
<dbReference type="Gene3D" id="3.30.360.10">
    <property type="entry name" value="Dihydrodipicolinate Reductase, domain 2"/>
    <property type="match status" value="1"/>
</dbReference>
<dbReference type="Gene3D" id="3.40.50.720">
    <property type="entry name" value="NAD(P)-binding Rossmann-like Domain"/>
    <property type="match status" value="1"/>
</dbReference>
<dbReference type="HAMAP" id="MF_00150">
    <property type="entry name" value="ArgC_type1"/>
    <property type="match status" value="1"/>
</dbReference>
<dbReference type="InterPro" id="IPR023013">
    <property type="entry name" value="AGPR_AS"/>
</dbReference>
<dbReference type="InterPro" id="IPR000706">
    <property type="entry name" value="AGPR_type-1"/>
</dbReference>
<dbReference type="InterPro" id="IPR036291">
    <property type="entry name" value="NAD(P)-bd_dom_sf"/>
</dbReference>
<dbReference type="InterPro" id="IPR050085">
    <property type="entry name" value="NAGSA_dehydrogenase"/>
</dbReference>
<dbReference type="InterPro" id="IPR000534">
    <property type="entry name" value="Semialdehyde_DH_NAD-bd"/>
</dbReference>
<dbReference type="NCBIfam" id="TIGR01850">
    <property type="entry name" value="argC"/>
    <property type="match status" value="1"/>
</dbReference>
<dbReference type="PANTHER" id="PTHR32338:SF10">
    <property type="entry name" value="N-ACETYL-GAMMA-GLUTAMYL-PHOSPHATE REDUCTASE, CHLOROPLASTIC-RELATED"/>
    <property type="match status" value="1"/>
</dbReference>
<dbReference type="PANTHER" id="PTHR32338">
    <property type="entry name" value="N-ACETYL-GAMMA-GLUTAMYL-PHOSPHATE REDUCTASE, CHLOROPLASTIC-RELATED-RELATED"/>
    <property type="match status" value="1"/>
</dbReference>
<dbReference type="Pfam" id="PF01118">
    <property type="entry name" value="Semialdhyde_dh"/>
    <property type="match status" value="1"/>
</dbReference>
<dbReference type="Pfam" id="PF22698">
    <property type="entry name" value="Semialdhyde_dhC_1"/>
    <property type="match status" value="1"/>
</dbReference>
<dbReference type="SMART" id="SM00859">
    <property type="entry name" value="Semialdhyde_dh"/>
    <property type="match status" value="1"/>
</dbReference>
<dbReference type="SUPFAM" id="SSF55347">
    <property type="entry name" value="Glyceraldehyde-3-phosphate dehydrogenase-like, C-terminal domain"/>
    <property type="match status" value="1"/>
</dbReference>
<dbReference type="SUPFAM" id="SSF51735">
    <property type="entry name" value="NAD(P)-binding Rossmann-fold domains"/>
    <property type="match status" value="1"/>
</dbReference>
<dbReference type="PROSITE" id="PS01224">
    <property type="entry name" value="ARGC"/>
    <property type="match status" value="1"/>
</dbReference>